<protein>
    <recommendedName>
        <fullName evidence="1">ATP-dependent protease subunit HslV</fullName>
        <ecNumber evidence="1">3.4.25.2</ecNumber>
    </recommendedName>
</protein>
<keyword id="KW-0021">Allosteric enzyme</keyword>
<keyword id="KW-0963">Cytoplasm</keyword>
<keyword id="KW-0378">Hydrolase</keyword>
<keyword id="KW-0479">Metal-binding</keyword>
<keyword id="KW-0645">Protease</keyword>
<keyword id="KW-1185">Reference proteome</keyword>
<keyword id="KW-0915">Sodium</keyword>
<keyword id="KW-0888">Threonine protease</keyword>
<evidence type="ECO:0000255" key="1">
    <source>
        <dbReference type="HAMAP-Rule" id="MF_00248"/>
    </source>
</evidence>
<accession>B4SGR7</accession>
<name>HSLV_PELPB</name>
<comment type="function">
    <text evidence="1">Protease subunit of a proteasome-like degradation complex believed to be a general protein degrading machinery.</text>
</comment>
<comment type="catalytic activity">
    <reaction evidence="1">
        <text>ATP-dependent cleavage of peptide bonds with broad specificity.</text>
        <dbReference type="EC" id="3.4.25.2"/>
    </reaction>
</comment>
<comment type="activity regulation">
    <text evidence="1">Allosterically activated by HslU binding.</text>
</comment>
<comment type="subunit">
    <text evidence="1">A double ring-shaped homohexamer of HslV is capped on each side by a ring-shaped HslU homohexamer. The assembly of the HslU/HslV complex is dependent on binding of ATP.</text>
</comment>
<comment type="subcellular location">
    <subcellularLocation>
        <location evidence="1">Cytoplasm</location>
    </subcellularLocation>
</comment>
<comment type="similarity">
    <text evidence="1">Belongs to the peptidase T1B family. HslV subfamily.</text>
</comment>
<feature type="chain" id="PRO_1000100902" description="ATP-dependent protease subunit HslV">
    <location>
        <begin position="1"/>
        <end position="182"/>
    </location>
</feature>
<feature type="active site" evidence="1">
    <location>
        <position position="12"/>
    </location>
</feature>
<feature type="binding site" evidence="1">
    <location>
        <position position="167"/>
    </location>
    <ligand>
        <name>Na(+)</name>
        <dbReference type="ChEBI" id="CHEBI:29101"/>
    </ligand>
</feature>
<feature type="binding site" evidence="1">
    <location>
        <position position="170"/>
    </location>
    <ligand>
        <name>Na(+)</name>
        <dbReference type="ChEBI" id="CHEBI:29101"/>
    </ligand>
</feature>
<feature type="binding site" evidence="1">
    <location>
        <position position="173"/>
    </location>
    <ligand>
        <name>Na(+)</name>
        <dbReference type="ChEBI" id="CHEBI:29101"/>
    </ligand>
</feature>
<organism>
    <name type="scientific">Pelodictyon phaeoclathratiforme (strain DSM 5477 / BU-1)</name>
    <dbReference type="NCBI Taxonomy" id="324925"/>
    <lineage>
        <taxon>Bacteria</taxon>
        <taxon>Pseudomonadati</taxon>
        <taxon>Chlorobiota</taxon>
        <taxon>Chlorobiia</taxon>
        <taxon>Chlorobiales</taxon>
        <taxon>Chlorobiaceae</taxon>
        <taxon>Chlorobium/Pelodictyon group</taxon>
        <taxon>Pelodictyon</taxon>
    </lineage>
</organism>
<gene>
    <name evidence="1" type="primary">hslV</name>
    <name type="ordered locus">Ppha_1208</name>
</gene>
<reference key="1">
    <citation type="submission" date="2008-06" db="EMBL/GenBank/DDBJ databases">
        <title>Complete sequence of Pelodictyon phaeoclathratiforme BU-1.</title>
        <authorList>
            <consortium name="US DOE Joint Genome Institute"/>
            <person name="Lucas S."/>
            <person name="Copeland A."/>
            <person name="Lapidus A."/>
            <person name="Glavina del Rio T."/>
            <person name="Dalin E."/>
            <person name="Tice H."/>
            <person name="Bruce D."/>
            <person name="Goodwin L."/>
            <person name="Pitluck S."/>
            <person name="Schmutz J."/>
            <person name="Larimer F."/>
            <person name="Land M."/>
            <person name="Hauser L."/>
            <person name="Kyrpides N."/>
            <person name="Mikhailova N."/>
            <person name="Liu Z."/>
            <person name="Li T."/>
            <person name="Zhao F."/>
            <person name="Overmann J."/>
            <person name="Bryant D.A."/>
            <person name="Richardson P."/>
        </authorList>
    </citation>
    <scope>NUCLEOTIDE SEQUENCE [LARGE SCALE GENOMIC DNA]</scope>
    <source>
        <strain>DSM 5477 / BU-1</strain>
    </source>
</reference>
<dbReference type="EC" id="3.4.25.2" evidence="1"/>
<dbReference type="EMBL" id="CP001110">
    <property type="protein sequence ID" value="ACF43480.1"/>
    <property type="molecule type" value="Genomic_DNA"/>
</dbReference>
<dbReference type="RefSeq" id="WP_012507972.1">
    <property type="nucleotide sequence ID" value="NC_011060.1"/>
</dbReference>
<dbReference type="SMR" id="B4SGR7"/>
<dbReference type="STRING" id="324925.Ppha_1208"/>
<dbReference type="KEGG" id="pph:Ppha_1208"/>
<dbReference type="eggNOG" id="COG5405">
    <property type="taxonomic scope" value="Bacteria"/>
</dbReference>
<dbReference type="HOGENOM" id="CLU_093872_1_0_10"/>
<dbReference type="OrthoDB" id="9804884at2"/>
<dbReference type="Proteomes" id="UP000002724">
    <property type="component" value="Chromosome"/>
</dbReference>
<dbReference type="GO" id="GO:0009376">
    <property type="term" value="C:HslUV protease complex"/>
    <property type="evidence" value="ECO:0007669"/>
    <property type="project" value="UniProtKB-UniRule"/>
</dbReference>
<dbReference type="GO" id="GO:0005839">
    <property type="term" value="C:proteasome core complex"/>
    <property type="evidence" value="ECO:0007669"/>
    <property type="project" value="InterPro"/>
</dbReference>
<dbReference type="GO" id="GO:0046872">
    <property type="term" value="F:metal ion binding"/>
    <property type="evidence" value="ECO:0007669"/>
    <property type="project" value="UniProtKB-KW"/>
</dbReference>
<dbReference type="GO" id="GO:0004298">
    <property type="term" value="F:threonine-type endopeptidase activity"/>
    <property type="evidence" value="ECO:0007669"/>
    <property type="project" value="UniProtKB-KW"/>
</dbReference>
<dbReference type="GO" id="GO:0051603">
    <property type="term" value="P:proteolysis involved in protein catabolic process"/>
    <property type="evidence" value="ECO:0007669"/>
    <property type="project" value="InterPro"/>
</dbReference>
<dbReference type="CDD" id="cd01913">
    <property type="entry name" value="protease_HslV"/>
    <property type="match status" value="1"/>
</dbReference>
<dbReference type="Gene3D" id="3.60.20.10">
    <property type="entry name" value="Glutamine Phosphoribosylpyrophosphate, subunit 1, domain 1"/>
    <property type="match status" value="1"/>
</dbReference>
<dbReference type="HAMAP" id="MF_00248">
    <property type="entry name" value="HslV"/>
    <property type="match status" value="1"/>
</dbReference>
<dbReference type="InterPro" id="IPR022281">
    <property type="entry name" value="ATP-dep_Prtase_HsIV_su"/>
</dbReference>
<dbReference type="InterPro" id="IPR029055">
    <property type="entry name" value="Ntn_hydrolases_N"/>
</dbReference>
<dbReference type="InterPro" id="IPR001353">
    <property type="entry name" value="Proteasome_sua/b"/>
</dbReference>
<dbReference type="InterPro" id="IPR023333">
    <property type="entry name" value="Proteasome_suB-type"/>
</dbReference>
<dbReference type="NCBIfam" id="TIGR03692">
    <property type="entry name" value="ATP_dep_HslV"/>
    <property type="match status" value="1"/>
</dbReference>
<dbReference type="NCBIfam" id="NF003964">
    <property type="entry name" value="PRK05456.1"/>
    <property type="match status" value="1"/>
</dbReference>
<dbReference type="PANTHER" id="PTHR32194:SF0">
    <property type="entry name" value="ATP-DEPENDENT PROTEASE SUBUNIT HSLV"/>
    <property type="match status" value="1"/>
</dbReference>
<dbReference type="PANTHER" id="PTHR32194">
    <property type="entry name" value="METALLOPROTEASE TLDD"/>
    <property type="match status" value="1"/>
</dbReference>
<dbReference type="Pfam" id="PF00227">
    <property type="entry name" value="Proteasome"/>
    <property type="match status" value="1"/>
</dbReference>
<dbReference type="PIRSF" id="PIRSF039093">
    <property type="entry name" value="HslV"/>
    <property type="match status" value="1"/>
</dbReference>
<dbReference type="SUPFAM" id="SSF56235">
    <property type="entry name" value="N-terminal nucleophile aminohydrolases (Ntn hydrolases)"/>
    <property type="match status" value="1"/>
</dbReference>
<dbReference type="PROSITE" id="PS51476">
    <property type="entry name" value="PROTEASOME_BETA_2"/>
    <property type="match status" value="1"/>
</dbReference>
<proteinExistence type="inferred from homology"/>
<sequence length="182" mass="19828">MKNNQRPVIRSTTVIGVIRDGKAALGSDGQMTLGNTVIKHSTRKIRRLYHGKLVAGFAGATADAVTLLDRFEEKLEAYNGKLDRAAVELARDWRTDKYLRRLEAMLAIVSHDKALIISGTGDVIEPEDGIVAIGSGSMYALAAARSLMKHSSLPAKEIVLESLKIAADICIYTNDHIIVEEV</sequence>